<organism>
    <name type="scientific">Myxococcus xanthus (strain DK1622)</name>
    <dbReference type="NCBI Taxonomy" id="246197"/>
    <lineage>
        <taxon>Bacteria</taxon>
        <taxon>Pseudomonadati</taxon>
        <taxon>Myxococcota</taxon>
        <taxon>Myxococcia</taxon>
        <taxon>Myxococcales</taxon>
        <taxon>Cystobacterineae</taxon>
        <taxon>Myxococcaceae</taxon>
        <taxon>Myxococcus</taxon>
    </lineage>
</organism>
<gene>
    <name type="primary">pyrF</name>
    <name type="synonym">uraA</name>
    <name type="ordered locus">MXAN_5910</name>
</gene>
<proteinExistence type="inferred from homology"/>
<keyword id="KW-0210">Decarboxylase</keyword>
<keyword id="KW-0456">Lyase</keyword>
<keyword id="KW-0665">Pyrimidine biosynthesis</keyword>
<keyword id="KW-1185">Reference proteome</keyword>
<reference key="1">
    <citation type="journal article" date="1992" name="J. Biol. Chem.">
        <title>The orotidine-5'-monophosphate decarboxylase gene of Myxococcus xanthus. Comparison to the OMP decarboxylase gene family.</title>
        <authorList>
            <person name="Kimsey H.H."/>
            <person name="Kaiser D."/>
        </authorList>
    </citation>
    <scope>NUCLEOTIDE SEQUENCE [GENOMIC DNA]</scope>
</reference>
<reference key="2">
    <citation type="journal article" date="2006" name="Proc. Natl. Acad. Sci. U.S.A.">
        <title>Evolution of sensory complexity recorded in a myxobacterial genome.</title>
        <authorList>
            <person name="Goldman B.S."/>
            <person name="Nierman W.C."/>
            <person name="Kaiser D."/>
            <person name="Slater S.C."/>
            <person name="Durkin A.S."/>
            <person name="Eisen J.A."/>
            <person name="Ronning C.M."/>
            <person name="Barbazuk W.B."/>
            <person name="Blanchard M."/>
            <person name="Field C."/>
            <person name="Halling C."/>
            <person name="Hinkle G."/>
            <person name="Iartchuk O."/>
            <person name="Kim H.S."/>
            <person name="Mackenzie C."/>
            <person name="Madupu R."/>
            <person name="Miller N."/>
            <person name="Shvartsbeyn A."/>
            <person name="Sullivan S.A."/>
            <person name="Vaudin M."/>
            <person name="Wiegand R."/>
            <person name="Kaplan H.B."/>
        </authorList>
    </citation>
    <scope>NUCLEOTIDE SEQUENCE [LARGE SCALE GENOMIC DNA]</scope>
    <source>
        <strain>DK1622</strain>
    </source>
</reference>
<comment type="catalytic activity">
    <reaction>
        <text>orotidine 5'-phosphate + H(+) = UMP + CO2</text>
        <dbReference type="Rhea" id="RHEA:11596"/>
        <dbReference type="ChEBI" id="CHEBI:15378"/>
        <dbReference type="ChEBI" id="CHEBI:16526"/>
        <dbReference type="ChEBI" id="CHEBI:57538"/>
        <dbReference type="ChEBI" id="CHEBI:57865"/>
        <dbReference type="EC" id="4.1.1.23"/>
    </reaction>
</comment>
<comment type="pathway">
    <text>Pyrimidine metabolism; UMP biosynthesis via de novo pathway; UMP from orotate: step 2/2.</text>
</comment>
<comment type="similarity">
    <text evidence="2">Belongs to the OMP decarboxylase family. Type 2 subfamily.</text>
</comment>
<dbReference type="EC" id="4.1.1.23"/>
<dbReference type="EMBL" id="M79324">
    <property type="protein sequence ID" value="AAA25401.1"/>
    <property type="molecule type" value="Genomic_DNA"/>
</dbReference>
<dbReference type="EMBL" id="CP000113">
    <property type="protein sequence ID" value="ABF86406.1"/>
    <property type="molecule type" value="Genomic_DNA"/>
</dbReference>
<dbReference type="PIR" id="B41768">
    <property type="entry name" value="B41768"/>
</dbReference>
<dbReference type="RefSeq" id="WP_011555861.1">
    <property type="nucleotide sequence ID" value="NC_008095.1"/>
</dbReference>
<dbReference type="SMR" id="P24220"/>
<dbReference type="STRING" id="246197.MXAN_5910"/>
<dbReference type="EnsemblBacteria" id="ABF86406">
    <property type="protein sequence ID" value="ABF86406"/>
    <property type="gene ID" value="MXAN_5910"/>
</dbReference>
<dbReference type="GeneID" id="41363148"/>
<dbReference type="KEGG" id="mxa:MXAN_5910"/>
<dbReference type="eggNOG" id="COG0284">
    <property type="taxonomic scope" value="Bacteria"/>
</dbReference>
<dbReference type="HOGENOM" id="CLU_060704_0_0_7"/>
<dbReference type="OrthoDB" id="9808470at2"/>
<dbReference type="UniPathway" id="UPA00070">
    <property type="reaction ID" value="UER00120"/>
</dbReference>
<dbReference type="Proteomes" id="UP000002402">
    <property type="component" value="Chromosome"/>
</dbReference>
<dbReference type="GO" id="GO:0004590">
    <property type="term" value="F:orotidine-5'-phosphate decarboxylase activity"/>
    <property type="evidence" value="ECO:0007669"/>
    <property type="project" value="UniProtKB-UniRule"/>
</dbReference>
<dbReference type="GO" id="GO:0006207">
    <property type="term" value="P:'de novo' pyrimidine nucleobase biosynthetic process"/>
    <property type="evidence" value="ECO:0007669"/>
    <property type="project" value="InterPro"/>
</dbReference>
<dbReference type="GO" id="GO:0044205">
    <property type="term" value="P:'de novo' UMP biosynthetic process"/>
    <property type="evidence" value="ECO:0007669"/>
    <property type="project" value="UniProtKB-UniRule"/>
</dbReference>
<dbReference type="CDD" id="cd04725">
    <property type="entry name" value="OMP_decarboxylase_like"/>
    <property type="match status" value="1"/>
</dbReference>
<dbReference type="Gene3D" id="3.20.20.70">
    <property type="entry name" value="Aldolase class I"/>
    <property type="match status" value="1"/>
</dbReference>
<dbReference type="HAMAP" id="MF_01215">
    <property type="entry name" value="OMPdecase_type2"/>
    <property type="match status" value="1"/>
</dbReference>
<dbReference type="InterPro" id="IPR013785">
    <property type="entry name" value="Aldolase_TIM"/>
</dbReference>
<dbReference type="InterPro" id="IPR018089">
    <property type="entry name" value="OMPdecase_AS"/>
</dbReference>
<dbReference type="InterPro" id="IPR011995">
    <property type="entry name" value="OMPdecase_type-2"/>
</dbReference>
<dbReference type="InterPro" id="IPR001754">
    <property type="entry name" value="OMPdeCOase_dom"/>
</dbReference>
<dbReference type="InterPro" id="IPR011060">
    <property type="entry name" value="RibuloseP-bd_barrel"/>
</dbReference>
<dbReference type="NCBIfam" id="TIGR02127">
    <property type="entry name" value="pyrF_sub2"/>
    <property type="match status" value="1"/>
</dbReference>
<dbReference type="PANTHER" id="PTHR43375">
    <property type="entry name" value="OROTIDINE 5'-PHOSPHATE DECARBOXYLASE"/>
    <property type="match status" value="1"/>
</dbReference>
<dbReference type="PANTHER" id="PTHR43375:SF1">
    <property type="entry name" value="OROTIDINE 5'-PHOSPHATE DECARBOXYLASE"/>
    <property type="match status" value="1"/>
</dbReference>
<dbReference type="Pfam" id="PF00215">
    <property type="entry name" value="OMPdecase"/>
    <property type="match status" value="1"/>
</dbReference>
<dbReference type="SMART" id="SM00934">
    <property type="entry name" value="OMPdecase"/>
    <property type="match status" value="1"/>
</dbReference>
<dbReference type="SUPFAM" id="SSF51366">
    <property type="entry name" value="Ribulose-phoshate binding barrel"/>
    <property type="match status" value="1"/>
</dbReference>
<dbReference type="PROSITE" id="PS00156">
    <property type="entry name" value="OMPDECASE"/>
    <property type="match status" value="1"/>
</dbReference>
<feature type="chain" id="PRO_0000134632" description="Orotidine 5'-phosphate decarboxylase">
    <location>
        <begin position="1"/>
        <end position="288"/>
    </location>
</feature>
<feature type="active site" description="Proton donor" evidence="1">
    <location>
        <position position="99"/>
    </location>
</feature>
<name>PYRF_MYXXD</name>
<sequence length="288" mass="30468">MTTPQPFAHRFSQLAEQRSPFCLGIDPSRDLLTRWGLPDNARGLRDFCERVADAAGSSVAVVKPQSAFFERHGPEGLQVLQELMRRFKSVGTLTLLDVKRGDIGSTMEAYAETVFGEGSAYEADAATFTAYLGLGALLKTLERARASGAAAFLVVRSSNPEGTSLQMSRGEDGRTVAEALADGLRAFNEKPGQDAAPVAGAVMGATLPDSDRGVIERLGGALLLTPGIGAQGAGFDDLKRLFAGREAQVIPTATRSVLEAGPDTAALRQALERHLAPARAFRATARPS</sequence>
<evidence type="ECO:0000250" key="1"/>
<evidence type="ECO:0000305" key="2"/>
<protein>
    <recommendedName>
        <fullName>Orotidine 5'-phosphate decarboxylase</fullName>
        <ecNumber>4.1.1.23</ecNumber>
    </recommendedName>
    <alternativeName>
        <fullName>OMP decarboxylase</fullName>
        <shortName>OMPDCase</shortName>
        <shortName>OMPdecase</shortName>
    </alternativeName>
</protein>
<accession>P24220</accession>
<accession>Q1CZX6</accession>